<dbReference type="EMBL" id="CU329670">
    <property type="protein sequence ID" value="CAA90455.1"/>
    <property type="molecule type" value="Genomic_DNA"/>
</dbReference>
<dbReference type="PIR" id="S58096">
    <property type="entry name" value="S58096"/>
</dbReference>
<dbReference type="RefSeq" id="NP_592932.1">
    <property type="nucleotide sequence ID" value="NM_001018333.2"/>
</dbReference>
<dbReference type="SMR" id="Q09686"/>
<dbReference type="BioGRID" id="278911">
    <property type="interactions" value="4"/>
</dbReference>
<dbReference type="FunCoup" id="Q09686">
    <property type="interactions" value="306"/>
</dbReference>
<dbReference type="STRING" id="284812.Q09686"/>
<dbReference type="PaxDb" id="4896-SPAC13C5.04.1"/>
<dbReference type="EnsemblFungi" id="SPAC13C5.04.1">
    <property type="protein sequence ID" value="SPAC13C5.04.1:pep"/>
    <property type="gene ID" value="SPAC13C5.04"/>
</dbReference>
<dbReference type="KEGG" id="spo:2542450"/>
<dbReference type="PomBase" id="SPAC13C5.04"/>
<dbReference type="VEuPathDB" id="FungiDB:SPAC13C5.04"/>
<dbReference type="eggNOG" id="KOG3179">
    <property type="taxonomic scope" value="Eukaryota"/>
</dbReference>
<dbReference type="HOGENOM" id="CLU_054974_0_2_1"/>
<dbReference type="InParanoid" id="Q09686"/>
<dbReference type="OMA" id="PWIQTLK"/>
<dbReference type="PhylomeDB" id="Q09686"/>
<dbReference type="PRO" id="PR:Q09686"/>
<dbReference type="Proteomes" id="UP000002485">
    <property type="component" value="Chromosome I"/>
</dbReference>
<dbReference type="GO" id="GO:0005829">
    <property type="term" value="C:cytosol"/>
    <property type="evidence" value="ECO:0007005"/>
    <property type="project" value="PomBase"/>
</dbReference>
<dbReference type="GO" id="GO:0005634">
    <property type="term" value="C:nucleus"/>
    <property type="evidence" value="ECO:0007005"/>
    <property type="project" value="PomBase"/>
</dbReference>
<dbReference type="GO" id="GO:0016811">
    <property type="term" value="F:hydrolase activity, acting on carbon-nitrogen (but not peptide) bonds, in linear amides"/>
    <property type="evidence" value="ECO:0000255"/>
    <property type="project" value="PomBase"/>
</dbReference>
<dbReference type="GO" id="GO:0016740">
    <property type="term" value="F:transferase activity"/>
    <property type="evidence" value="ECO:0007669"/>
    <property type="project" value="UniProtKB-KW"/>
</dbReference>
<dbReference type="CDD" id="cd01741">
    <property type="entry name" value="GATase1_1"/>
    <property type="match status" value="1"/>
</dbReference>
<dbReference type="FunFam" id="3.40.50.880:FF:000112">
    <property type="entry name" value="Class I glutamine amidotransferase-like protein"/>
    <property type="match status" value="1"/>
</dbReference>
<dbReference type="Gene3D" id="3.40.50.880">
    <property type="match status" value="1"/>
</dbReference>
<dbReference type="InterPro" id="IPR044992">
    <property type="entry name" value="ChyE-like"/>
</dbReference>
<dbReference type="InterPro" id="IPR029062">
    <property type="entry name" value="Class_I_gatase-like"/>
</dbReference>
<dbReference type="InterPro" id="IPR017926">
    <property type="entry name" value="GATASE"/>
</dbReference>
<dbReference type="PANTHER" id="PTHR42695">
    <property type="entry name" value="GLUTAMINE AMIDOTRANSFERASE YLR126C-RELATED"/>
    <property type="match status" value="1"/>
</dbReference>
<dbReference type="PANTHER" id="PTHR42695:SF5">
    <property type="entry name" value="GLUTAMINE AMIDOTRANSFERASE YLR126C-RELATED"/>
    <property type="match status" value="1"/>
</dbReference>
<dbReference type="Pfam" id="PF00117">
    <property type="entry name" value="GATase"/>
    <property type="match status" value="1"/>
</dbReference>
<dbReference type="SUPFAM" id="SSF52317">
    <property type="entry name" value="Class I glutamine amidotransferase-like"/>
    <property type="match status" value="1"/>
</dbReference>
<dbReference type="PROSITE" id="PS51273">
    <property type="entry name" value="GATASE_TYPE_1"/>
    <property type="match status" value="1"/>
</dbReference>
<reference key="1">
    <citation type="journal article" date="2002" name="Nature">
        <title>The genome sequence of Schizosaccharomyces pombe.</title>
        <authorList>
            <person name="Wood V."/>
            <person name="Gwilliam R."/>
            <person name="Rajandream M.A."/>
            <person name="Lyne M.H."/>
            <person name="Lyne R."/>
            <person name="Stewart A."/>
            <person name="Sgouros J.G."/>
            <person name="Peat N."/>
            <person name="Hayles J."/>
            <person name="Baker S.G."/>
            <person name="Basham D."/>
            <person name="Bowman S."/>
            <person name="Brooks K."/>
            <person name="Brown D."/>
            <person name="Brown S."/>
            <person name="Chillingworth T."/>
            <person name="Churcher C.M."/>
            <person name="Collins M."/>
            <person name="Connor R."/>
            <person name="Cronin A."/>
            <person name="Davis P."/>
            <person name="Feltwell T."/>
            <person name="Fraser A."/>
            <person name="Gentles S."/>
            <person name="Goble A."/>
            <person name="Hamlin N."/>
            <person name="Harris D.E."/>
            <person name="Hidalgo J."/>
            <person name="Hodgson G."/>
            <person name="Holroyd S."/>
            <person name="Hornsby T."/>
            <person name="Howarth S."/>
            <person name="Huckle E.J."/>
            <person name="Hunt S."/>
            <person name="Jagels K."/>
            <person name="James K.D."/>
            <person name="Jones L."/>
            <person name="Jones M."/>
            <person name="Leather S."/>
            <person name="McDonald S."/>
            <person name="McLean J."/>
            <person name="Mooney P."/>
            <person name="Moule S."/>
            <person name="Mungall K.L."/>
            <person name="Murphy L.D."/>
            <person name="Niblett D."/>
            <person name="Odell C."/>
            <person name="Oliver K."/>
            <person name="O'Neil S."/>
            <person name="Pearson D."/>
            <person name="Quail M.A."/>
            <person name="Rabbinowitsch E."/>
            <person name="Rutherford K.M."/>
            <person name="Rutter S."/>
            <person name="Saunders D."/>
            <person name="Seeger K."/>
            <person name="Sharp S."/>
            <person name="Skelton J."/>
            <person name="Simmonds M.N."/>
            <person name="Squares R."/>
            <person name="Squares S."/>
            <person name="Stevens K."/>
            <person name="Taylor K."/>
            <person name="Taylor R.G."/>
            <person name="Tivey A."/>
            <person name="Walsh S.V."/>
            <person name="Warren T."/>
            <person name="Whitehead S."/>
            <person name="Woodward J.R."/>
            <person name="Volckaert G."/>
            <person name="Aert R."/>
            <person name="Robben J."/>
            <person name="Grymonprez B."/>
            <person name="Weltjens I."/>
            <person name="Vanstreels E."/>
            <person name="Rieger M."/>
            <person name="Schaefer M."/>
            <person name="Mueller-Auer S."/>
            <person name="Gabel C."/>
            <person name="Fuchs M."/>
            <person name="Duesterhoeft A."/>
            <person name="Fritzc C."/>
            <person name="Holzer E."/>
            <person name="Moestl D."/>
            <person name="Hilbert H."/>
            <person name="Borzym K."/>
            <person name="Langer I."/>
            <person name="Beck A."/>
            <person name="Lehrach H."/>
            <person name="Reinhardt R."/>
            <person name="Pohl T.M."/>
            <person name="Eger P."/>
            <person name="Zimmermann W."/>
            <person name="Wedler H."/>
            <person name="Wambutt R."/>
            <person name="Purnelle B."/>
            <person name="Goffeau A."/>
            <person name="Cadieu E."/>
            <person name="Dreano S."/>
            <person name="Gloux S."/>
            <person name="Lelaure V."/>
            <person name="Mottier S."/>
            <person name="Galibert F."/>
            <person name="Aves S.J."/>
            <person name="Xiang Z."/>
            <person name="Hunt C."/>
            <person name="Moore K."/>
            <person name="Hurst S.M."/>
            <person name="Lucas M."/>
            <person name="Rochet M."/>
            <person name="Gaillardin C."/>
            <person name="Tallada V.A."/>
            <person name="Garzon A."/>
            <person name="Thode G."/>
            <person name="Daga R.R."/>
            <person name="Cruzado L."/>
            <person name="Jimenez J."/>
            <person name="Sanchez M."/>
            <person name="del Rey F."/>
            <person name="Benito J."/>
            <person name="Dominguez A."/>
            <person name="Revuelta J.L."/>
            <person name="Moreno S."/>
            <person name="Armstrong J."/>
            <person name="Forsburg S.L."/>
            <person name="Cerutti L."/>
            <person name="Lowe T."/>
            <person name="McCombie W.R."/>
            <person name="Paulsen I."/>
            <person name="Potashkin J."/>
            <person name="Shpakovski G.V."/>
            <person name="Ussery D."/>
            <person name="Barrell B.G."/>
            <person name="Nurse P."/>
        </authorList>
    </citation>
    <scope>NUCLEOTIDE SEQUENCE [LARGE SCALE GENOMIC DNA]</scope>
    <source>
        <strain>972 / ATCC 24843</strain>
    </source>
</reference>
<organism>
    <name type="scientific">Schizosaccharomyces pombe (strain 972 / ATCC 24843)</name>
    <name type="common">Fission yeast</name>
    <dbReference type="NCBI Taxonomy" id="284812"/>
    <lineage>
        <taxon>Eukaryota</taxon>
        <taxon>Fungi</taxon>
        <taxon>Dikarya</taxon>
        <taxon>Ascomycota</taxon>
        <taxon>Taphrinomycotina</taxon>
        <taxon>Schizosaccharomycetes</taxon>
        <taxon>Schizosaccharomycetales</taxon>
        <taxon>Schizosaccharomycetaceae</taxon>
        <taxon>Schizosaccharomyces</taxon>
    </lineage>
</organism>
<protein>
    <recommendedName>
        <fullName>Putative glutamine amidotransferase-like protein C13C5.04</fullName>
    </recommendedName>
</protein>
<gene>
    <name type="ORF">SPAC13C5.04</name>
</gene>
<proteinExistence type="predicted"/>
<name>YA14_SCHPO</name>
<keyword id="KW-0315">Glutamine amidotransferase</keyword>
<keyword id="KW-1185">Reference proteome</keyword>
<keyword id="KW-0808">Transferase</keyword>
<accession>Q09686</accession>
<feature type="chain" id="PRO_0000116382" description="Putative glutamine amidotransferase-like protein C13C5.04">
    <location>
        <begin position="1"/>
        <end position="248"/>
    </location>
</feature>
<feature type="domain" description="Glutamine amidotransferase type-1" evidence="1">
    <location>
        <begin position="13"/>
        <end position="217"/>
    </location>
</feature>
<evidence type="ECO:0000255" key="1">
    <source>
        <dbReference type="PROSITE-ProRule" id="PRU00605"/>
    </source>
</evidence>
<sequence length="248" mass="28003">MDYHIAILNADTPMVEITSAYGDYADMVKSLLQSGSEYYSTEWNLVTKTYEVYKNPNDYPQKEDFPNINAIIITGSKASATSDAPWIKKLISFVKDVLFKYPHIKIVGLCFGHQIVAKAAGVPIIQNPKGWEVSSTVVQLTENGEKFFGRKVININQMHQDMAVDVPEGFELLGSTEDCEFQIFYKPRQALTFQGHPEFSTEVVNTMVKVLRGTEVFTEQQKEEALKRSENPADNDFLAVSIVKFLLE</sequence>